<name>YM306_YEAST</name>
<accession>A0A023PXI0</accession>
<proteinExistence type="uncertain"/>
<evidence type="ECO:0000255" key="1"/>
<evidence type="ECO:0000305" key="2"/>
<evidence type="ECO:0000305" key="3">
    <source>
    </source>
</evidence>
<evidence type="ECO:0000312" key="4">
    <source>
        <dbReference type="SGD" id="S000004922"/>
    </source>
</evidence>
<reference key="1">
    <citation type="journal article" date="1997" name="Nature">
        <title>The nucleotide sequence of Saccharomyces cerevisiae chromosome XIII.</title>
        <authorList>
            <person name="Bowman S."/>
            <person name="Churcher C.M."/>
            <person name="Badcock K."/>
            <person name="Brown D."/>
            <person name="Chillingworth T."/>
            <person name="Connor R."/>
            <person name="Dedman K."/>
            <person name="Devlin K."/>
            <person name="Gentles S."/>
            <person name="Hamlin N."/>
            <person name="Hunt S."/>
            <person name="Jagels K."/>
            <person name="Lye G."/>
            <person name="Moule S."/>
            <person name="Odell C."/>
            <person name="Pearson D."/>
            <person name="Rajandream M.A."/>
            <person name="Rice P."/>
            <person name="Skelton J."/>
            <person name="Walsh S.V."/>
            <person name="Whitehead S."/>
            <person name="Barrell B.G."/>
        </authorList>
    </citation>
    <scope>NUCLEOTIDE SEQUENCE [LARGE SCALE GENOMIC DNA]</scope>
    <source>
        <strain>ATCC 204508 / S288c</strain>
    </source>
</reference>
<reference key="2">
    <citation type="journal article" date="2014" name="G3 (Bethesda)">
        <title>The reference genome sequence of Saccharomyces cerevisiae: Then and now.</title>
        <authorList>
            <person name="Engel S.R."/>
            <person name="Dietrich F.S."/>
            <person name="Fisk D.G."/>
            <person name="Binkley G."/>
            <person name="Balakrishnan R."/>
            <person name="Costanzo M.C."/>
            <person name="Dwight S.S."/>
            <person name="Hitz B.C."/>
            <person name="Karra K."/>
            <person name="Nash R.S."/>
            <person name="Weng S."/>
            <person name="Wong E.D."/>
            <person name="Lloyd P."/>
            <person name="Skrzypek M.S."/>
            <person name="Miyasato S.R."/>
            <person name="Simison M."/>
            <person name="Cherry J.M."/>
        </authorList>
    </citation>
    <scope>GENOME REANNOTATION</scope>
    <source>
        <strain>ATCC 204508 / S288c</strain>
    </source>
</reference>
<gene>
    <name evidence="4" type="ordered locus">YMR306C-A</name>
</gene>
<protein>
    <recommendedName>
        <fullName evidence="2">Putative uncharacterized membrane protein YMR306C-A</fullName>
    </recommendedName>
</protein>
<dbReference type="EMBL" id="KJ412296">
    <property type="protein sequence ID" value="AHX39339.1"/>
    <property type="molecule type" value="Genomic_DNA"/>
</dbReference>
<dbReference type="PIR" id="S69862">
    <property type="entry name" value="S69862"/>
</dbReference>
<dbReference type="PaxDb" id="4932-YMR306C-A"/>
<dbReference type="EnsemblFungi" id="YMR306C-A_mRNA">
    <property type="protein sequence ID" value="YMR306C-A"/>
    <property type="gene ID" value="YMR306C-A"/>
</dbReference>
<dbReference type="AGR" id="SGD:S000004922"/>
<dbReference type="SGD" id="S000004922">
    <property type="gene designation" value="YMR306C-A"/>
</dbReference>
<dbReference type="HOGENOM" id="CLU_1960841_0_0_1"/>
<dbReference type="GO" id="GO:0016020">
    <property type="term" value="C:membrane"/>
    <property type="evidence" value="ECO:0007669"/>
    <property type="project" value="UniProtKB-SubCell"/>
</dbReference>
<keyword id="KW-0472">Membrane</keyword>
<keyword id="KW-0812">Transmembrane</keyword>
<keyword id="KW-1133">Transmembrane helix</keyword>
<sequence>MIGTSSLYQLLKITFFFYPYATVLKVGKVGVVVRIVDGAFGPVSLLFWLLGWKIPSKRVPSSNSCGLDTKSPAKNGAMSIKRSTPSITKYREKYFETILLLNALCFRVKILLCAIILLGFIQNSTIVCQ</sequence>
<comment type="subcellular location">
    <subcellularLocation>
        <location evidence="1">Membrane</location>
        <topology evidence="1">Multi-pass membrane protein</topology>
    </subcellularLocation>
</comment>
<comment type="miscellaneous">
    <text evidence="2">Partially overlaps FKS3.</text>
</comment>
<comment type="caution">
    <text evidence="3">Product of a dubious gene prediction unlikely to encode a functional protein. Because of that it is not part of the S.cerevisiae S288c complete/reference proteome set.</text>
</comment>
<feature type="chain" id="PRO_0000431050" description="Putative uncharacterized membrane protein YMR306C-A">
    <location>
        <begin position="1"/>
        <end position="129"/>
    </location>
</feature>
<feature type="transmembrane region" description="Helical; Name=1" evidence="1">
    <location>
        <begin position="35"/>
        <end position="55"/>
    </location>
</feature>
<feature type="transmembrane region" description="Helical; Name=2" evidence="1">
    <location>
        <begin position="98"/>
        <end position="118"/>
    </location>
</feature>
<organism>
    <name type="scientific">Saccharomyces cerevisiae (strain ATCC 204508 / S288c)</name>
    <name type="common">Baker's yeast</name>
    <dbReference type="NCBI Taxonomy" id="559292"/>
    <lineage>
        <taxon>Eukaryota</taxon>
        <taxon>Fungi</taxon>
        <taxon>Dikarya</taxon>
        <taxon>Ascomycota</taxon>
        <taxon>Saccharomycotina</taxon>
        <taxon>Saccharomycetes</taxon>
        <taxon>Saccharomycetales</taxon>
        <taxon>Saccharomycetaceae</taxon>
        <taxon>Saccharomyces</taxon>
    </lineage>
</organism>